<proteinExistence type="inferred from homology"/>
<protein>
    <recommendedName>
        <fullName>1,4-alpha-glucan-branching enzyme</fullName>
        <ecNumber evidence="2">2.4.1.18</ecNumber>
    </recommendedName>
    <alternativeName>
        <fullName>Glycogen-branching enzyme</fullName>
    </alternativeName>
</protein>
<dbReference type="EC" id="2.4.1.18" evidence="2"/>
<dbReference type="EMBL" id="AAFI02000012">
    <property type="protein sequence ID" value="EAL69945.1"/>
    <property type="molecule type" value="Genomic_DNA"/>
</dbReference>
<dbReference type="RefSeq" id="XP_644004.1">
    <property type="nucleotide sequence ID" value="XM_638912.1"/>
</dbReference>
<dbReference type="SMR" id="Q555Q9"/>
<dbReference type="FunCoup" id="Q555Q9">
    <property type="interactions" value="190"/>
</dbReference>
<dbReference type="STRING" id="44689.Q555Q9"/>
<dbReference type="CAZy" id="CBM48">
    <property type="family name" value="Carbohydrate-Binding Module Family 48"/>
</dbReference>
<dbReference type="CAZy" id="GH13">
    <property type="family name" value="Glycoside Hydrolase Family 13"/>
</dbReference>
<dbReference type="PaxDb" id="44689-DDB0214943"/>
<dbReference type="EnsemblProtists" id="EAL69945">
    <property type="protein sequence ID" value="EAL69945"/>
    <property type="gene ID" value="DDB_G0274105"/>
</dbReference>
<dbReference type="GeneID" id="8619432"/>
<dbReference type="KEGG" id="ddi:DDB_G0274105"/>
<dbReference type="dictyBase" id="DDB_G0274105">
    <property type="gene designation" value="glgB"/>
</dbReference>
<dbReference type="VEuPathDB" id="AmoebaDB:DDB_G0274105"/>
<dbReference type="eggNOG" id="KOG0470">
    <property type="taxonomic scope" value="Eukaryota"/>
</dbReference>
<dbReference type="HOGENOM" id="CLU_011131_2_2_1"/>
<dbReference type="InParanoid" id="Q555Q9"/>
<dbReference type="OMA" id="YEMHLGS"/>
<dbReference type="PhylomeDB" id="Q555Q9"/>
<dbReference type="Reactome" id="R-DDI-3322077">
    <property type="pathway name" value="Glycogen synthesis"/>
</dbReference>
<dbReference type="UniPathway" id="UPA00164"/>
<dbReference type="PRO" id="PR:Q555Q9"/>
<dbReference type="Proteomes" id="UP000002195">
    <property type="component" value="Chromosome 2"/>
</dbReference>
<dbReference type="GO" id="GO:0005737">
    <property type="term" value="C:cytoplasm"/>
    <property type="evidence" value="ECO:0000250"/>
    <property type="project" value="UniProtKB"/>
</dbReference>
<dbReference type="GO" id="GO:0003844">
    <property type="term" value="F:1,4-alpha-glucan branching enzyme activity"/>
    <property type="evidence" value="ECO:0000250"/>
    <property type="project" value="UniProtKB"/>
</dbReference>
<dbReference type="GO" id="GO:0043169">
    <property type="term" value="F:cation binding"/>
    <property type="evidence" value="ECO:0007669"/>
    <property type="project" value="InterPro"/>
</dbReference>
<dbReference type="GO" id="GO:0004553">
    <property type="term" value="F:hydrolase activity, hydrolyzing O-glycosyl compounds"/>
    <property type="evidence" value="ECO:0007669"/>
    <property type="project" value="InterPro"/>
</dbReference>
<dbReference type="GO" id="GO:0005978">
    <property type="term" value="P:glycogen biosynthetic process"/>
    <property type="evidence" value="ECO:0000250"/>
    <property type="project" value="UniProtKB"/>
</dbReference>
<dbReference type="CDD" id="cd11321">
    <property type="entry name" value="AmyAc_bac_euk_BE"/>
    <property type="match status" value="1"/>
</dbReference>
<dbReference type="CDD" id="cd02854">
    <property type="entry name" value="E_set_GBE_euk_N"/>
    <property type="match status" value="1"/>
</dbReference>
<dbReference type="FunFam" id="3.20.20.80:FF:000001">
    <property type="entry name" value="1,4-alpha-glucan branching enzyme"/>
    <property type="match status" value="1"/>
</dbReference>
<dbReference type="FunFam" id="2.60.40.10:FF:000250">
    <property type="entry name" value="1,4-alpha-glucan-branching enzyme, chloroplastic/amyloplastic"/>
    <property type="match status" value="1"/>
</dbReference>
<dbReference type="FunFam" id="2.60.40.1180:FF:000003">
    <property type="entry name" value="1,4-alpha-glucan-branching enzyme, chloroplastic/amyloplastic"/>
    <property type="match status" value="1"/>
</dbReference>
<dbReference type="Gene3D" id="3.20.20.80">
    <property type="entry name" value="Glycosidases"/>
    <property type="match status" value="1"/>
</dbReference>
<dbReference type="Gene3D" id="2.60.40.1180">
    <property type="entry name" value="Golgi alpha-mannosidase II"/>
    <property type="match status" value="1"/>
</dbReference>
<dbReference type="Gene3D" id="2.60.40.10">
    <property type="entry name" value="Immunoglobulins"/>
    <property type="match status" value="1"/>
</dbReference>
<dbReference type="InterPro" id="IPR006048">
    <property type="entry name" value="A-amylase/branching_C"/>
</dbReference>
<dbReference type="InterPro" id="IPR037439">
    <property type="entry name" value="Branching_enzy"/>
</dbReference>
<dbReference type="InterPro" id="IPR006047">
    <property type="entry name" value="Glyco_hydro_13_cat_dom"/>
</dbReference>
<dbReference type="InterPro" id="IPR004193">
    <property type="entry name" value="Glyco_hydro_13_N"/>
</dbReference>
<dbReference type="InterPro" id="IPR013780">
    <property type="entry name" value="Glyco_hydro_b"/>
</dbReference>
<dbReference type="InterPro" id="IPR017853">
    <property type="entry name" value="Glycoside_hydrolase_SF"/>
</dbReference>
<dbReference type="InterPro" id="IPR013783">
    <property type="entry name" value="Ig-like_fold"/>
</dbReference>
<dbReference type="InterPro" id="IPR014756">
    <property type="entry name" value="Ig_E-set"/>
</dbReference>
<dbReference type="PANTHER" id="PTHR43651">
    <property type="entry name" value="1,4-ALPHA-GLUCAN-BRANCHING ENZYME"/>
    <property type="match status" value="1"/>
</dbReference>
<dbReference type="PANTHER" id="PTHR43651:SF3">
    <property type="entry name" value="1,4-ALPHA-GLUCAN-BRANCHING ENZYME"/>
    <property type="match status" value="1"/>
</dbReference>
<dbReference type="Pfam" id="PF00128">
    <property type="entry name" value="Alpha-amylase"/>
    <property type="match status" value="1"/>
</dbReference>
<dbReference type="Pfam" id="PF02806">
    <property type="entry name" value="Alpha-amylase_C"/>
    <property type="match status" value="1"/>
</dbReference>
<dbReference type="Pfam" id="PF02922">
    <property type="entry name" value="CBM_48"/>
    <property type="match status" value="1"/>
</dbReference>
<dbReference type="PIRSF" id="PIRSF000463">
    <property type="entry name" value="GlgB"/>
    <property type="match status" value="1"/>
</dbReference>
<dbReference type="SMART" id="SM00642">
    <property type="entry name" value="Aamy"/>
    <property type="match status" value="1"/>
</dbReference>
<dbReference type="SUPFAM" id="SSF51445">
    <property type="entry name" value="(Trans)glycosidases"/>
    <property type="match status" value="1"/>
</dbReference>
<dbReference type="SUPFAM" id="SSF81296">
    <property type="entry name" value="E set domains"/>
    <property type="match status" value="1"/>
</dbReference>
<dbReference type="SUPFAM" id="SSF51011">
    <property type="entry name" value="Glycosyl hydrolase domain"/>
    <property type="match status" value="1"/>
</dbReference>
<reference key="1">
    <citation type="journal article" date="2002" name="Nature">
        <title>Sequence and analysis of chromosome 2 of Dictyostelium discoideum.</title>
        <authorList>
            <person name="Gloeckner G."/>
            <person name="Eichinger L."/>
            <person name="Szafranski K."/>
            <person name="Pachebat J.A."/>
            <person name="Bankier A.T."/>
            <person name="Dear P.H."/>
            <person name="Lehmann R."/>
            <person name="Baumgart C."/>
            <person name="Parra G."/>
            <person name="Abril J.F."/>
            <person name="Guigo R."/>
            <person name="Kumpf K."/>
            <person name="Tunggal B."/>
            <person name="Cox E.C."/>
            <person name="Quail M.A."/>
            <person name="Platzer M."/>
            <person name="Rosenthal A."/>
            <person name="Noegel A.A."/>
        </authorList>
    </citation>
    <scope>NUCLEOTIDE SEQUENCE [LARGE SCALE GENOMIC DNA]</scope>
    <source>
        <strain>AX4</strain>
    </source>
</reference>
<reference key="2">
    <citation type="journal article" date="2005" name="Nature">
        <title>The genome of the social amoeba Dictyostelium discoideum.</title>
        <authorList>
            <person name="Eichinger L."/>
            <person name="Pachebat J.A."/>
            <person name="Gloeckner G."/>
            <person name="Rajandream M.A."/>
            <person name="Sucgang R."/>
            <person name="Berriman M."/>
            <person name="Song J."/>
            <person name="Olsen R."/>
            <person name="Szafranski K."/>
            <person name="Xu Q."/>
            <person name="Tunggal B."/>
            <person name="Kummerfeld S."/>
            <person name="Madera M."/>
            <person name="Konfortov B.A."/>
            <person name="Rivero F."/>
            <person name="Bankier A.T."/>
            <person name="Lehmann R."/>
            <person name="Hamlin N."/>
            <person name="Davies R."/>
            <person name="Gaudet P."/>
            <person name="Fey P."/>
            <person name="Pilcher K."/>
            <person name="Chen G."/>
            <person name="Saunders D."/>
            <person name="Sodergren E.J."/>
            <person name="Davis P."/>
            <person name="Kerhornou A."/>
            <person name="Nie X."/>
            <person name="Hall N."/>
            <person name="Anjard C."/>
            <person name="Hemphill L."/>
            <person name="Bason N."/>
            <person name="Farbrother P."/>
            <person name="Desany B."/>
            <person name="Just E."/>
            <person name="Morio T."/>
            <person name="Rost R."/>
            <person name="Churcher C.M."/>
            <person name="Cooper J."/>
            <person name="Haydock S."/>
            <person name="van Driessche N."/>
            <person name="Cronin A."/>
            <person name="Goodhead I."/>
            <person name="Muzny D.M."/>
            <person name="Mourier T."/>
            <person name="Pain A."/>
            <person name="Lu M."/>
            <person name="Harper D."/>
            <person name="Lindsay R."/>
            <person name="Hauser H."/>
            <person name="James K.D."/>
            <person name="Quiles M."/>
            <person name="Madan Babu M."/>
            <person name="Saito T."/>
            <person name="Buchrieser C."/>
            <person name="Wardroper A."/>
            <person name="Felder M."/>
            <person name="Thangavelu M."/>
            <person name="Johnson D."/>
            <person name="Knights A."/>
            <person name="Loulseged H."/>
            <person name="Mungall K.L."/>
            <person name="Oliver K."/>
            <person name="Price C."/>
            <person name="Quail M.A."/>
            <person name="Urushihara H."/>
            <person name="Hernandez J."/>
            <person name="Rabbinowitsch E."/>
            <person name="Steffen D."/>
            <person name="Sanders M."/>
            <person name="Ma J."/>
            <person name="Kohara Y."/>
            <person name="Sharp S."/>
            <person name="Simmonds M.N."/>
            <person name="Spiegler S."/>
            <person name="Tivey A."/>
            <person name="Sugano S."/>
            <person name="White B."/>
            <person name="Walker D."/>
            <person name="Woodward J.R."/>
            <person name="Winckler T."/>
            <person name="Tanaka Y."/>
            <person name="Shaulsky G."/>
            <person name="Schleicher M."/>
            <person name="Weinstock G.M."/>
            <person name="Rosenthal A."/>
            <person name="Cox E.C."/>
            <person name="Chisholm R.L."/>
            <person name="Gibbs R.A."/>
            <person name="Loomis W.F."/>
            <person name="Platzer M."/>
            <person name="Kay R.R."/>
            <person name="Williams J.G."/>
            <person name="Dear P.H."/>
            <person name="Noegel A.A."/>
            <person name="Barrell B.G."/>
            <person name="Kuspa A."/>
        </authorList>
    </citation>
    <scope>NUCLEOTIDE SEQUENCE [LARGE SCALE GENOMIC DNA]</scope>
    <source>
        <strain>AX4</strain>
    </source>
</reference>
<comment type="function">
    <text evidence="2">Glycogen-branching enzyme participates in the glycogen biosynthetic process along with glycogenin and glycogen synthase. Generates alpha-1,6-glucosidic branches from alpha-1,4-linked glucose chains, to increase solubility of the glycogen polymer.</text>
</comment>
<comment type="catalytic activity">
    <reaction evidence="2">
        <text>Transfers a segment of a (1-&gt;4)-alpha-D-glucan chain to a primary hydroxy group in a similar glucan chain.</text>
        <dbReference type="EC" id="2.4.1.18"/>
    </reaction>
</comment>
<comment type="pathway">
    <text evidence="2">Glycan biosynthesis; glycogen biosynthesis.</text>
</comment>
<comment type="subunit">
    <text evidence="1">Monomer.</text>
</comment>
<comment type="similarity">
    <text evidence="4">Belongs to the glycosyl hydrolase 13 family. GlgB subfamily.</text>
</comment>
<organism>
    <name type="scientific">Dictyostelium discoideum</name>
    <name type="common">Social amoeba</name>
    <dbReference type="NCBI Taxonomy" id="44689"/>
    <lineage>
        <taxon>Eukaryota</taxon>
        <taxon>Amoebozoa</taxon>
        <taxon>Evosea</taxon>
        <taxon>Eumycetozoa</taxon>
        <taxon>Dictyostelia</taxon>
        <taxon>Dictyosteliales</taxon>
        <taxon>Dictyosteliaceae</taxon>
        <taxon>Dictyostelium</taxon>
    </lineage>
</organism>
<keyword id="KW-0320">Glycogen biosynthesis</keyword>
<keyword id="KW-0328">Glycosyltransferase</keyword>
<keyword id="KW-1185">Reference proteome</keyword>
<keyword id="KW-0808">Transferase</keyword>
<sequence>MTDYSKATDGTKVIHDDPWLEPYKEVIKRRHNQVKNTIQKLEESEGSLLKFSQGYEYFGFNVTKDGVNYREWLPSAHEVYLVGDFNQWNKTSHPLERDNYGRWSIFIPNNSNGECAIPHGSKIKIYLKLANGNFDYRIPAWIKRVEQTKENPVFDGVFWNPSKQYVFKNKSPMKPTELRIYEAHVGMSSELPEISTYSKFKDTVLPMVKELGYNCIQLMAVMEHAYYASFGYQVTNFFAISSRFGTPEELKEMIDKAHEMGLLVFLDVVHSHASKNVLDGLNQLDGTDHHYFHSGGRGNHELWDSRLFNYGNWEVMRFLLSNLRFYVDEYHFDGFRFDGVTSMIYTHHGLSPACSYDDYFGGAVDEDALNYLTLANVMLHTLNPSIVTIAEEVTGLATLCRPFSEGGGDFDYRLAMGIPDKWIELVKEKKDEDWNMGTIAHMLSNRRYKEKNIAYAESHDQSLVGDKTLAFWLMDKEMYTNMSVTTEETPIIDRGMSLHKMIRLITSSLGGDGYLNFMGNEFGHPEWVDFPREGNNNSLHHARRRWDLYRNPLLRYKQLRDFDIAMNKAEQEFRWLSSDFAYISLKHEDDKIIVFERASLIFIFNFHPSKSFSDYRIGSGVPGKFINVLDSDRKEFGGHVRIGKDNYHYTEDKPWHDRKYSLLIYIPSRTCLVLKKVD</sequence>
<evidence type="ECO:0000250" key="1"/>
<evidence type="ECO:0000250" key="2">
    <source>
        <dbReference type="UniProtKB" id="Q04446"/>
    </source>
</evidence>
<evidence type="ECO:0000250" key="3">
    <source>
        <dbReference type="UniProtKB" id="Q6FJV0"/>
    </source>
</evidence>
<evidence type="ECO:0000305" key="4"/>
<accession>Q555Q9</accession>
<accession>Q8T189</accession>
<name>GLGB_DICDI</name>
<gene>
    <name type="primary">glgB</name>
    <name type="ORF">DDB_G0274105</name>
</gene>
<feature type="chain" id="PRO_0000327602" description="1,4-alpha-glucan-branching enzyme">
    <location>
        <begin position="1"/>
        <end position="678"/>
    </location>
</feature>
<feature type="active site" description="Nucleophile" evidence="2">
    <location>
        <position position="338"/>
    </location>
</feature>
<feature type="active site" description="Proton donor" evidence="2">
    <location>
        <position position="391"/>
    </location>
</feature>
<feature type="binding site" evidence="3">
    <location>
        <position position="88"/>
    </location>
    <ligand>
        <name>(1,4-alpha-D-glucosyl)n</name>
        <dbReference type="ChEBI" id="CHEBI:15444"/>
    </ligand>
</feature>
<feature type="binding site" evidence="3">
    <location>
        <position position="124"/>
    </location>
    <ligand>
        <name>(1,4-alpha-D-glucosyl)n</name>
        <dbReference type="ChEBI" id="CHEBI:15444"/>
    </ligand>
</feature>
<feature type="site" description="Transition state stabilizer" evidence="2">
    <location>
        <position position="460"/>
    </location>
</feature>